<feature type="chain" id="PRO_0000260107" description="Small ribosomal subunit protein bS20">
    <location>
        <begin position="1"/>
        <end position="90"/>
    </location>
</feature>
<feature type="region of interest" description="Disordered" evidence="2">
    <location>
        <begin position="1"/>
        <end position="25"/>
    </location>
</feature>
<accession>Q1BU63</accession>
<sequence>MANSAQARKRARQAAKANSHNSALRSKFRTAIKSVRKAVEAGDQAKAAELFKAAVKTIDTIADKKIVHKNKAARSKSRLAAAVKGLQAAA</sequence>
<name>RS20_BURO1</name>
<evidence type="ECO:0000255" key="1">
    <source>
        <dbReference type="HAMAP-Rule" id="MF_00500"/>
    </source>
</evidence>
<evidence type="ECO:0000256" key="2">
    <source>
        <dbReference type="SAM" id="MobiDB-lite"/>
    </source>
</evidence>
<evidence type="ECO:0000305" key="3"/>
<gene>
    <name evidence="1" type="primary">rpsT</name>
    <name type="ordered locus">Bcen_1939</name>
</gene>
<keyword id="KW-0687">Ribonucleoprotein</keyword>
<keyword id="KW-0689">Ribosomal protein</keyword>
<keyword id="KW-0694">RNA-binding</keyword>
<keyword id="KW-0699">rRNA-binding</keyword>
<protein>
    <recommendedName>
        <fullName evidence="1">Small ribosomal subunit protein bS20</fullName>
    </recommendedName>
    <alternativeName>
        <fullName evidence="3">30S ribosomal protein S20</fullName>
    </alternativeName>
</protein>
<reference key="1">
    <citation type="submission" date="2006-05" db="EMBL/GenBank/DDBJ databases">
        <title>Complete sequence of chromosome 1 of Burkholderia cenocepacia AU 1054.</title>
        <authorList>
            <consortium name="US DOE Joint Genome Institute"/>
            <person name="Copeland A."/>
            <person name="Lucas S."/>
            <person name="Lapidus A."/>
            <person name="Barry K."/>
            <person name="Detter J.C."/>
            <person name="Glavina del Rio T."/>
            <person name="Hammon N."/>
            <person name="Israni S."/>
            <person name="Dalin E."/>
            <person name="Tice H."/>
            <person name="Pitluck S."/>
            <person name="Chain P."/>
            <person name="Malfatti S."/>
            <person name="Shin M."/>
            <person name="Vergez L."/>
            <person name="Schmutz J."/>
            <person name="Larimer F."/>
            <person name="Land M."/>
            <person name="Hauser L."/>
            <person name="Kyrpides N."/>
            <person name="Lykidis A."/>
            <person name="LiPuma J.J."/>
            <person name="Konstantinidis K."/>
            <person name="Tiedje J.M."/>
            <person name="Richardson P."/>
        </authorList>
    </citation>
    <scope>NUCLEOTIDE SEQUENCE [LARGE SCALE GENOMIC DNA]</scope>
    <source>
        <strain>AU 1054</strain>
    </source>
</reference>
<proteinExistence type="inferred from homology"/>
<dbReference type="EMBL" id="CP000378">
    <property type="protein sequence ID" value="ABF76842.1"/>
    <property type="molecule type" value="Genomic_DNA"/>
</dbReference>
<dbReference type="SMR" id="Q1BU63"/>
<dbReference type="HOGENOM" id="CLU_160655_4_0_4"/>
<dbReference type="GO" id="GO:0005829">
    <property type="term" value="C:cytosol"/>
    <property type="evidence" value="ECO:0007669"/>
    <property type="project" value="TreeGrafter"/>
</dbReference>
<dbReference type="GO" id="GO:0015935">
    <property type="term" value="C:small ribosomal subunit"/>
    <property type="evidence" value="ECO:0007669"/>
    <property type="project" value="TreeGrafter"/>
</dbReference>
<dbReference type="GO" id="GO:0070181">
    <property type="term" value="F:small ribosomal subunit rRNA binding"/>
    <property type="evidence" value="ECO:0007669"/>
    <property type="project" value="TreeGrafter"/>
</dbReference>
<dbReference type="GO" id="GO:0003735">
    <property type="term" value="F:structural constituent of ribosome"/>
    <property type="evidence" value="ECO:0007669"/>
    <property type="project" value="InterPro"/>
</dbReference>
<dbReference type="GO" id="GO:0006412">
    <property type="term" value="P:translation"/>
    <property type="evidence" value="ECO:0007669"/>
    <property type="project" value="UniProtKB-UniRule"/>
</dbReference>
<dbReference type="FunFam" id="1.20.58.110:FF:000001">
    <property type="entry name" value="30S ribosomal protein S20"/>
    <property type="match status" value="1"/>
</dbReference>
<dbReference type="Gene3D" id="1.20.58.110">
    <property type="entry name" value="Ribosomal protein S20"/>
    <property type="match status" value="1"/>
</dbReference>
<dbReference type="HAMAP" id="MF_00500">
    <property type="entry name" value="Ribosomal_bS20"/>
    <property type="match status" value="1"/>
</dbReference>
<dbReference type="InterPro" id="IPR002583">
    <property type="entry name" value="Ribosomal_bS20"/>
</dbReference>
<dbReference type="InterPro" id="IPR036510">
    <property type="entry name" value="Ribosomal_bS20_sf"/>
</dbReference>
<dbReference type="NCBIfam" id="TIGR00029">
    <property type="entry name" value="S20"/>
    <property type="match status" value="1"/>
</dbReference>
<dbReference type="PANTHER" id="PTHR33398">
    <property type="entry name" value="30S RIBOSOMAL PROTEIN S20"/>
    <property type="match status" value="1"/>
</dbReference>
<dbReference type="PANTHER" id="PTHR33398:SF1">
    <property type="entry name" value="SMALL RIBOSOMAL SUBUNIT PROTEIN BS20C"/>
    <property type="match status" value="1"/>
</dbReference>
<dbReference type="Pfam" id="PF01649">
    <property type="entry name" value="Ribosomal_S20p"/>
    <property type="match status" value="1"/>
</dbReference>
<dbReference type="SUPFAM" id="SSF46992">
    <property type="entry name" value="Ribosomal protein S20"/>
    <property type="match status" value="1"/>
</dbReference>
<comment type="function">
    <text evidence="1">Binds directly to 16S ribosomal RNA.</text>
</comment>
<comment type="similarity">
    <text evidence="1">Belongs to the bacterial ribosomal protein bS20 family.</text>
</comment>
<organism>
    <name type="scientific">Burkholderia orbicola (strain AU 1054)</name>
    <dbReference type="NCBI Taxonomy" id="331271"/>
    <lineage>
        <taxon>Bacteria</taxon>
        <taxon>Pseudomonadati</taxon>
        <taxon>Pseudomonadota</taxon>
        <taxon>Betaproteobacteria</taxon>
        <taxon>Burkholderiales</taxon>
        <taxon>Burkholderiaceae</taxon>
        <taxon>Burkholderia</taxon>
        <taxon>Burkholderia cepacia complex</taxon>
        <taxon>Burkholderia orbicola</taxon>
    </lineage>
</organism>